<comment type="function">
    <text evidence="2 3">Involved in the dimethyl sulfide degradation pathway (PubMed:12686641). Activates the expression of sfnG and sfnF.</text>
</comment>
<comment type="induction">
    <text evidence="2">Under sulfate limitation conditions, it is transcriptionally activated by the LysR-type transcriptional regulator, CysB.</text>
</comment>
<comment type="disruption phenotype">
    <text evidence="2">Cells lacking this gene are still able to convert dimethyl sulfide (DMS) to dimethyl sulfone (DMSO2) under sulfate limitation, suggesting that the conversion of dimethyl sulfone (DMSO2) to methanesulfonate (MSA) is interrupted in this mutant.</text>
</comment>
<proteinExistence type="evidence at transcript level"/>
<keyword id="KW-0010">Activator</keyword>
<keyword id="KW-0067">ATP-binding</keyword>
<keyword id="KW-0238">DNA-binding</keyword>
<keyword id="KW-0547">Nucleotide-binding</keyword>
<keyword id="KW-0804">Transcription</keyword>
<keyword id="KW-0805">Transcription regulation</keyword>
<sequence length="366" mass="40778">MQLLTLPPSPTLATSIRATAQVFEDPRSQALLAHLQQVAPSEASVLIIGETGTGKELVARHIHNLSGRRNGPFVAVNCGAFSESLVEAELFGHEKGAFTGALAAKAGWFEEANGGTLFLDEIGDLPLPIQVKLLRVLQEREVVRLGSRKSIPINVRVLAATNVQLEKAINAGHFREDLYYRLNVVTLQLHPLRDRPGDILPLARHFIRSYSDRLGYGPVELSAKAQAKLVEYSWPGNIRELENVIHHSLLTCGDGTVQAQDLRLSNLRIERQEEEPAGNGVEDLLQRAFSRLYEEQSGDLYEKVENALLRSAYRFCHYNQVHTAQLLGLSRNITRTRLIAIGELVVNKRRGQEQQVLDNRVVRLSI</sequence>
<dbReference type="EMBL" id="AB091764">
    <property type="protein sequence ID" value="BAC66053.1"/>
    <property type="molecule type" value="Genomic_DNA"/>
</dbReference>
<dbReference type="SMR" id="Q845S7"/>
<dbReference type="GO" id="GO:0005524">
    <property type="term" value="F:ATP binding"/>
    <property type="evidence" value="ECO:0007669"/>
    <property type="project" value="UniProtKB-KW"/>
</dbReference>
<dbReference type="GO" id="GO:0016887">
    <property type="term" value="F:ATP hydrolysis activity"/>
    <property type="evidence" value="ECO:0007669"/>
    <property type="project" value="InterPro"/>
</dbReference>
<dbReference type="GO" id="GO:0003677">
    <property type="term" value="F:DNA binding"/>
    <property type="evidence" value="ECO:0007669"/>
    <property type="project" value="UniProtKB-KW"/>
</dbReference>
<dbReference type="GO" id="GO:0006355">
    <property type="term" value="P:regulation of DNA-templated transcription"/>
    <property type="evidence" value="ECO:0007669"/>
    <property type="project" value="InterPro"/>
</dbReference>
<dbReference type="CDD" id="cd00009">
    <property type="entry name" value="AAA"/>
    <property type="match status" value="1"/>
</dbReference>
<dbReference type="FunFam" id="3.40.50.300:FF:000006">
    <property type="entry name" value="DNA-binding transcriptional regulator NtrC"/>
    <property type="match status" value="1"/>
</dbReference>
<dbReference type="Gene3D" id="1.10.8.60">
    <property type="match status" value="1"/>
</dbReference>
<dbReference type="Gene3D" id="1.10.10.60">
    <property type="entry name" value="Homeodomain-like"/>
    <property type="match status" value="1"/>
</dbReference>
<dbReference type="Gene3D" id="3.40.50.300">
    <property type="entry name" value="P-loop containing nucleotide triphosphate hydrolases"/>
    <property type="match status" value="1"/>
</dbReference>
<dbReference type="InterPro" id="IPR003593">
    <property type="entry name" value="AAA+_ATPase"/>
</dbReference>
<dbReference type="InterPro" id="IPR009057">
    <property type="entry name" value="Homeodomain-like_sf"/>
</dbReference>
<dbReference type="InterPro" id="IPR027417">
    <property type="entry name" value="P-loop_NTPase"/>
</dbReference>
<dbReference type="InterPro" id="IPR002078">
    <property type="entry name" value="Sigma_54_int"/>
</dbReference>
<dbReference type="InterPro" id="IPR025662">
    <property type="entry name" value="Sigma_54_int_dom_ATP-bd_1"/>
</dbReference>
<dbReference type="InterPro" id="IPR025943">
    <property type="entry name" value="Sigma_54_int_dom_ATP-bd_2"/>
</dbReference>
<dbReference type="InterPro" id="IPR025944">
    <property type="entry name" value="Sigma_54_int_dom_CS"/>
</dbReference>
<dbReference type="PANTHER" id="PTHR32071">
    <property type="entry name" value="TRANSCRIPTIONAL REGULATORY PROTEIN"/>
    <property type="match status" value="1"/>
</dbReference>
<dbReference type="PANTHER" id="PTHR32071:SF21">
    <property type="entry name" value="TRANSCRIPTIONAL REGULATORY PROTEIN FLGR"/>
    <property type="match status" value="1"/>
</dbReference>
<dbReference type="Pfam" id="PF00158">
    <property type="entry name" value="Sigma54_activat"/>
    <property type="match status" value="1"/>
</dbReference>
<dbReference type="SMART" id="SM00382">
    <property type="entry name" value="AAA"/>
    <property type="match status" value="1"/>
</dbReference>
<dbReference type="SUPFAM" id="SSF46689">
    <property type="entry name" value="Homeodomain-like"/>
    <property type="match status" value="1"/>
</dbReference>
<dbReference type="SUPFAM" id="SSF52540">
    <property type="entry name" value="P-loop containing nucleoside triphosphate hydrolases"/>
    <property type="match status" value="1"/>
</dbReference>
<dbReference type="PROSITE" id="PS00675">
    <property type="entry name" value="SIGMA54_INTERACT_1"/>
    <property type="match status" value="1"/>
</dbReference>
<dbReference type="PROSITE" id="PS00676">
    <property type="entry name" value="SIGMA54_INTERACT_2"/>
    <property type="match status" value="1"/>
</dbReference>
<dbReference type="PROSITE" id="PS00688">
    <property type="entry name" value="SIGMA54_INTERACT_3"/>
    <property type="match status" value="1"/>
</dbReference>
<dbReference type="PROSITE" id="PS50045">
    <property type="entry name" value="SIGMA54_INTERACT_4"/>
    <property type="match status" value="1"/>
</dbReference>
<feature type="chain" id="PRO_0000443543" description="Sigma54-dependent transcriptional activator SfnR">
    <location>
        <begin position="1"/>
        <end position="366"/>
    </location>
</feature>
<feature type="domain" description="Sigma-54 factor interaction" evidence="1">
    <location>
        <begin position="21"/>
        <end position="250"/>
    </location>
</feature>
<feature type="binding site" evidence="1">
    <location>
        <begin position="49"/>
        <end position="56"/>
    </location>
    <ligand>
        <name>ATP</name>
        <dbReference type="ChEBI" id="CHEBI:30616"/>
    </ligand>
</feature>
<feature type="binding site" evidence="1">
    <location>
        <begin position="112"/>
        <end position="121"/>
    </location>
    <ligand>
        <name>ATP</name>
        <dbReference type="ChEBI" id="CHEBI:30616"/>
    </ligand>
</feature>
<accession>Q845S7</accession>
<name>SFNR_PSEPU</name>
<reference key="1">
    <citation type="journal article" date="2003" name="Appl. Microbiol. Biotechnol.">
        <title>Characterization and identification of genes essential for dimethyl sulfide utilization in Pseudomonas putida strain DS1.</title>
        <authorList>
            <person name="Endoh T."/>
            <person name="Kasuga K."/>
            <person name="Horinouchi M."/>
            <person name="Yoshida T."/>
            <person name="Habe H."/>
            <person name="Nojiri H."/>
            <person name="Omori T."/>
        </authorList>
    </citation>
    <scope>NUCLEOTIDE SEQUENCE [GENOMIC DNA]</scope>
    <source>
        <strain evidence="5">DS1</strain>
    </source>
</reference>
<reference key="2">
    <citation type="journal article" date="2003" name="Microbiology">
        <title>A CysB-regulated and sigma54-dependent regulator, SfnR, is essential for dimethyl sulfone metabolism of Pseudomonas putida strain DS1.</title>
        <authorList>
            <person name="Endoh T."/>
            <person name="Habe H."/>
            <person name="Yoshida T."/>
            <person name="Nojiri H."/>
            <person name="Omori T."/>
        </authorList>
    </citation>
    <scope>NUCLEOTIDE SEQUENCE [GENOMIC DNA]</scope>
    <scope>FUNCTION</scope>
    <scope>INDUCTION</scope>
    <scope>DISRUPTION PHENOTYPE</scope>
    <source>
        <strain evidence="5">DS1</strain>
    </source>
</reference>
<reference key="3">
    <citation type="journal article" date="2005" name="Mol. Microbiol.">
        <title>The sigma54-dependent transcriptional activator SfnR regulates the expression of the Pseudomonas putida sfnFG operon responsible for dimethyl sulphone utilization.</title>
        <authorList>
            <person name="Endoh T."/>
            <person name="Habe H."/>
            <person name="Nojiri H."/>
            <person name="Yamane H."/>
            <person name="Omori T."/>
        </authorList>
    </citation>
    <scope>FUNCTION</scope>
    <source>
        <strain>DS1</strain>
    </source>
</reference>
<gene>
    <name evidence="5" type="primary">sfnR</name>
</gene>
<organism evidence="5">
    <name type="scientific">Pseudomonas putida</name>
    <name type="common">Arthrobacter siderocapsulatus</name>
    <dbReference type="NCBI Taxonomy" id="303"/>
    <lineage>
        <taxon>Bacteria</taxon>
        <taxon>Pseudomonadati</taxon>
        <taxon>Pseudomonadota</taxon>
        <taxon>Gammaproteobacteria</taxon>
        <taxon>Pseudomonadales</taxon>
        <taxon>Pseudomonadaceae</taxon>
        <taxon>Pseudomonas</taxon>
    </lineage>
</organism>
<evidence type="ECO:0000255" key="1">
    <source>
        <dbReference type="PROSITE-ProRule" id="PRU00193"/>
    </source>
</evidence>
<evidence type="ECO:0000269" key="2">
    <source>
    </source>
</evidence>
<evidence type="ECO:0000269" key="3">
    <source>
    </source>
</evidence>
<evidence type="ECO:0000303" key="4">
    <source>
    </source>
</evidence>
<evidence type="ECO:0000312" key="5">
    <source>
        <dbReference type="EMBL" id="BAC66053.1"/>
    </source>
</evidence>
<protein>
    <recommendedName>
        <fullName evidence="4">Sigma54-dependent transcriptional activator SfnR</fullName>
    </recommendedName>
</protein>